<protein>
    <recommendedName>
        <fullName evidence="1">Heat-inducible transcription repressor HrcA</fullName>
    </recommendedName>
</protein>
<proteinExistence type="inferred from homology"/>
<sequence length="392" mass="44965">MENRTEMSQLRASKKDSKISHVLLMAIKLYLESGQPVGSKLLKETYCSDLSSATIRNYFAQLETDGFLRKNHISGGRIPTDLAFRYYADHCSPVLEQEEISIIQQKLKELPEYSKNIVKDLQKASEILSEILQLPVCFSSPRFESDSVTNIQLVSIDDLRVVFVLSTEFGQLFTDVLWLPEQLPENSLKRIESFLQNYLRKHPSSVPLSQKEEDLGMTLYNEVVVRYLTRYCHFSEEDLYQTGLSRLLKYEVFKDPETLAQGLSFFENRKHMCQLLNSHLHKKAPTTFIGRELSDIVGNADPSCAVITVPYYMDRTPLGAFGVLGPMNLPYQQVFGTLSLFTERLKTILTQSFYKFKLSFRRPCPTDPRCSQKPAELTRRSSIKLLPAKELT</sequence>
<gene>
    <name evidence="1" type="primary">hrcA</name>
    <name type="ordered locus">TC_0673</name>
</gene>
<keyword id="KW-0678">Repressor</keyword>
<keyword id="KW-0346">Stress response</keyword>
<keyword id="KW-0804">Transcription</keyword>
<keyword id="KW-0805">Transcription regulation</keyword>
<dbReference type="EMBL" id="U52216">
    <property type="protein sequence ID" value="AAA97480.1"/>
    <property type="molecule type" value="Genomic_DNA"/>
</dbReference>
<dbReference type="EMBL" id="AE002160">
    <property type="protein sequence ID" value="AAF39494.1"/>
    <property type="molecule type" value="Genomic_DNA"/>
</dbReference>
<dbReference type="PIR" id="F81676">
    <property type="entry name" value="F81676"/>
</dbReference>
<dbReference type="SMR" id="P54306"/>
<dbReference type="KEGG" id="cmu:TC_0673"/>
<dbReference type="eggNOG" id="COG1420">
    <property type="taxonomic scope" value="Bacteria"/>
</dbReference>
<dbReference type="HOGENOM" id="CLU_050019_1_0_0"/>
<dbReference type="OrthoDB" id="9783139at2"/>
<dbReference type="Proteomes" id="UP000000800">
    <property type="component" value="Chromosome"/>
</dbReference>
<dbReference type="GO" id="GO:0003677">
    <property type="term" value="F:DNA binding"/>
    <property type="evidence" value="ECO:0007669"/>
    <property type="project" value="InterPro"/>
</dbReference>
<dbReference type="GO" id="GO:0045892">
    <property type="term" value="P:negative regulation of DNA-templated transcription"/>
    <property type="evidence" value="ECO:0007669"/>
    <property type="project" value="UniProtKB-UniRule"/>
</dbReference>
<dbReference type="FunFam" id="1.10.10.10:FF:000785">
    <property type="entry name" value="Heat-inducible transcription repressor HrcA"/>
    <property type="match status" value="1"/>
</dbReference>
<dbReference type="Gene3D" id="3.30.450.40">
    <property type="match status" value="1"/>
</dbReference>
<dbReference type="Gene3D" id="1.10.10.10">
    <property type="entry name" value="Winged helix-like DNA-binding domain superfamily/Winged helix DNA-binding domain"/>
    <property type="match status" value="1"/>
</dbReference>
<dbReference type="HAMAP" id="MF_00081">
    <property type="entry name" value="HrcA"/>
    <property type="match status" value="1"/>
</dbReference>
<dbReference type="InterPro" id="IPR029016">
    <property type="entry name" value="GAF-like_dom_sf"/>
</dbReference>
<dbReference type="InterPro" id="IPR002571">
    <property type="entry name" value="HrcA"/>
</dbReference>
<dbReference type="InterPro" id="IPR021153">
    <property type="entry name" value="HrcA_C"/>
</dbReference>
<dbReference type="InterPro" id="IPR036388">
    <property type="entry name" value="WH-like_DNA-bd_sf"/>
</dbReference>
<dbReference type="InterPro" id="IPR036390">
    <property type="entry name" value="WH_DNA-bd_sf"/>
</dbReference>
<dbReference type="NCBIfam" id="TIGR00331">
    <property type="entry name" value="hrcA"/>
    <property type="match status" value="1"/>
</dbReference>
<dbReference type="PANTHER" id="PTHR34824">
    <property type="entry name" value="HEAT-INDUCIBLE TRANSCRIPTION REPRESSOR HRCA"/>
    <property type="match status" value="1"/>
</dbReference>
<dbReference type="PANTHER" id="PTHR34824:SF1">
    <property type="entry name" value="HEAT-INDUCIBLE TRANSCRIPTION REPRESSOR HRCA"/>
    <property type="match status" value="1"/>
</dbReference>
<dbReference type="Pfam" id="PF01628">
    <property type="entry name" value="HrcA"/>
    <property type="match status" value="1"/>
</dbReference>
<dbReference type="PIRSF" id="PIRSF005485">
    <property type="entry name" value="HrcA"/>
    <property type="match status" value="1"/>
</dbReference>
<dbReference type="SUPFAM" id="SSF55781">
    <property type="entry name" value="GAF domain-like"/>
    <property type="match status" value="1"/>
</dbReference>
<dbReference type="SUPFAM" id="SSF46785">
    <property type="entry name" value="Winged helix' DNA-binding domain"/>
    <property type="match status" value="1"/>
</dbReference>
<feature type="chain" id="PRO_0000182466" description="Heat-inducible transcription repressor HrcA">
    <location>
        <begin position="1"/>
        <end position="392"/>
    </location>
</feature>
<feature type="sequence conflict" description="In Ref. 1; AAA97480." evidence="2" ref="1">
    <original>L</original>
    <variation>K</variation>
    <location>
        <position position="318"/>
    </location>
</feature>
<reference key="1">
    <citation type="journal article" date="1996" name="J. Bacteriol.">
        <title>Transcriptional organization and regulation of the dnaK and groE operons of Chlamydia trachomatis.</title>
        <authorList>
            <person name="Tan M."/>
            <person name="Wong B."/>
            <person name="Engel J.N."/>
        </authorList>
    </citation>
    <scope>NUCLEOTIDE SEQUENCE [GENOMIC DNA]</scope>
    <source>
        <strain>MoPn</strain>
    </source>
</reference>
<reference key="2">
    <citation type="journal article" date="2000" name="Nucleic Acids Res.">
        <title>Genome sequences of Chlamydia trachomatis MoPn and Chlamydia pneumoniae AR39.</title>
        <authorList>
            <person name="Read T.D."/>
            <person name="Brunham R.C."/>
            <person name="Shen C."/>
            <person name="Gill S.R."/>
            <person name="Heidelberg J.F."/>
            <person name="White O."/>
            <person name="Hickey E.K."/>
            <person name="Peterson J.D."/>
            <person name="Utterback T.R."/>
            <person name="Berry K.J."/>
            <person name="Bass S."/>
            <person name="Linher K.D."/>
            <person name="Weidman J.F."/>
            <person name="Khouri H.M."/>
            <person name="Craven B."/>
            <person name="Bowman C."/>
            <person name="Dodson R.J."/>
            <person name="Gwinn M.L."/>
            <person name="Nelson W.C."/>
            <person name="DeBoy R.T."/>
            <person name="Kolonay J.F."/>
            <person name="McClarty G."/>
            <person name="Salzberg S.L."/>
            <person name="Eisen J.A."/>
            <person name="Fraser C.M."/>
        </authorList>
    </citation>
    <scope>NUCLEOTIDE SEQUENCE [LARGE SCALE GENOMIC DNA]</scope>
    <source>
        <strain>MoPn / Nigg</strain>
    </source>
</reference>
<evidence type="ECO:0000255" key="1">
    <source>
        <dbReference type="HAMAP-Rule" id="MF_00081"/>
    </source>
</evidence>
<evidence type="ECO:0000305" key="2"/>
<name>HRCA_CHLMU</name>
<comment type="function">
    <text evidence="1">Negative regulator of class I heat shock genes (grpE-dnaK-dnaJ and groELS operons). Prevents heat-shock induction of these operons.</text>
</comment>
<comment type="similarity">
    <text evidence="1">Belongs to the HrcA family.</text>
</comment>
<organism>
    <name type="scientific">Chlamydia muridarum (strain MoPn / Nigg)</name>
    <dbReference type="NCBI Taxonomy" id="243161"/>
    <lineage>
        <taxon>Bacteria</taxon>
        <taxon>Pseudomonadati</taxon>
        <taxon>Chlamydiota</taxon>
        <taxon>Chlamydiia</taxon>
        <taxon>Chlamydiales</taxon>
        <taxon>Chlamydiaceae</taxon>
        <taxon>Chlamydia/Chlamydophila group</taxon>
        <taxon>Chlamydia</taxon>
    </lineage>
</organism>
<accession>P54306</accession>